<reference key="1">
    <citation type="journal article" date="2009" name="Genome Biol.">
        <title>Genomic and genetic analyses of diversity and plant interactions of Pseudomonas fluorescens.</title>
        <authorList>
            <person name="Silby M.W."/>
            <person name="Cerdeno-Tarraga A.M."/>
            <person name="Vernikos G.S."/>
            <person name="Giddens S.R."/>
            <person name="Jackson R.W."/>
            <person name="Preston G.M."/>
            <person name="Zhang X.-X."/>
            <person name="Moon C.D."/>
            <person name="Gehrig S.M."/>
            <person name="Godfrey S.A.C."/>
            <person name="Knight C.G."/>
            <person name="Malone J.G."/>
            <person name="Robinson Z."/>
            <person name="Spiers A.J."/>
            <person name="Harris S."/>
            <person name="Challis G.L."/>
            <person name="Yaxley A.M."/>
            <person name="Harris D."/>
            <person name="Seeger K."/>
            <person name="Murphy L."/>
            <person name="Rutter S."/>
            <person name="Squares R."/>
            <person name="Quail M.A."/>
            <person name="Saunders E."/>
            <person name="Mavromatis K."/>
            <person name="Brettin T.S."/>
            <person name="Bentley S.D."/>
            <person name="Hothersall J."/>
            <person name="Stephens E."/>
            <person name="Thomas C.M."/>
            <person name="Parkhill J."/>
            <person name="Levy S.B."/>
            <person name="Rainey P.B."/>
            <person name="Thomson N.R."/>
        </authorList>
    </citation>
    <scope>NUCLEOTIDE SEQUENCE [LARGE SCALE GENOMIC DNA]</scope>
    <source>
        <strain>SBW25</strain>
    </source>
</reference>
<gene>
    <name evidence="1" type="primary">infC</name>
    <name type="ordered locus">PFLU_4147</name>
</gene>
<keyword id="KW-0963">Cytoplasm</keyword>
<keyword id="KW-0396">Initiation factor</keyword>
<keyword id="KW-0648">Protein biosynthesis</keyword>
<proteinExistence type="inferred from homology"/>
<protein>
    <recommendedName>
        <fullName evidence="1">Translation initiation factor IF-3</fullName>
    </recommendedName>
</protein>
<name>IF3_PSEFS</name>
<feature type="chain" id="PRO_1000202546" description="Translation initiation factor IF-3">
    <location>
        <begin position="1"/>
        <end position="183"/>
    </location>
</feature>
<accession>C3JZN6</accession>
<dbReference type="EMBL" id="AM181176">
    <property type="protein sequence ID" value="CAY50643.1"/>
    <property type="molecule type" value="Genomic_DNA"/>
</dbReference>
<dbReference type="SMR" id="C3JZN6"/>
<dbReference type="STRING" id="294.SRM1_02090"/>
<dbReference type="eggNOG" id="COG0290">
    <property type="taxonomic scope" value="Bacteria"/>
</dbReference>
<dbReference type="HOGENOM" id="CLU_054919_3_2_6"/>
<dbReference type="GO" id="GO:0005829">
    <property type="term" value="C:cytosol"/>
    <property type="evidence" value="ECO:0007669"/>
    <property type="project" value="TreeGrafter"/>
</dbReference>
<dbReference type="GO" id="GO:0016020">
    <property type="term" value="C:membrane"/>
    <property type="evidence" value="ECO:0007669"/>
    <property type="project" value="TreeGrafter"/>
</dbReference>
<dbReference type="GO" id="GO:0043022">
    <property type="term" value="F:ribosome binding"/>
    <property type="evidence" value="ECO:0007669"/>
    <property type="project" value="TreeGrafter"/>
</dbReference>
<dbReference type="GO" id="GO:0003743">
    <property type="term" value="F:translation initiation factor activity"/>
    <property type="evidence" value="ECO:0007669"/>
    <property type="project" value="UniProtKB-UniRule"/>
</dbReference>
<dbReference type="GO" id="GO:0032790">
    <property type="term" value="P:ribosome disassembly"/>
    <property type="evidence" value="ECO:0007669"/>
    <property type="project" value="TreeGrafter"/>
</dbReference>
<dbReference type="FunFam" id="3.10.20.80:FF:000001">
    <property type="entry name" value="Translation initiation factor IF-3"/>
    <property type="match status" value="1"/>
</dbReference>
<dbReference type="FunFam" id="3.30.110.10:FF:000001">
    <property type="entry name" value="Translation initiation factor IF-3"/>
    <property type="match status" value="1"/>
</dbReference>
<dbReference type="Gene3D" id="3.30.110.10">
    <property type="entry name" value="Translation initiation factor 3 (IF-3), C-terminal domain"/>
    <property type="match status" value="1"/>
</dbReference>
<dbReference type="Gene3D" id="3.10.20.80">
    <property type="entry name" value="Translation initiation factor 3 (IF-3), N-terminal domain"/>
    <property type="match status" value="1"/>
</dbReference>
<dbReference type="HAMAP" id="MF_00080">
    <property type="entry name" value="IF_3"/>
    <property type="match status" value="1"/>
</dbReference>
<dbReference type="InterPro" id="IPR036788">
    <property type="entry name" value="T_IF-3_C_sf"/>
</dbReference>
<dbReference type="InterPro" id="IPR036787">
    <property type="entry name" value="T_IF-3_N_sf"/>
</dbReference>
<dbReference type="InterPro" id="IPR019813">
    <property type="entry name" value="Translation_initiation_fac3_CS"/>
</dbReference>
<dbReference type="InterPro" id="IPR001288">
    <property type="entry name" value="Translation_initiation_fac_3"/>
</dbReference>
<dbReference type="InterPro" id="IPR019815">
    <property type="entry name" value="Translation_initiation_fac_3_C"/>
</dbReference>
<dbReference type="InterPro" id="IPR019814">
    <property type="entry name" value="Translation_initiation_fac_3_N"/>
</dbReference>
<dbReference type="NCBIfam" id="TIGR00168">
    <property type="entry name" value="infC"/>
    <property type="match status" value="1"/>
</dbReference>
<dbReference type="PANTHER" id="PTHR10938">
    <property type="entry name" value="TRANSLATION INITIATION FACTOR IF-3"/>
    <property type="match status" value="1"/>
</dbReference>
<dbReference type="PANTHER" id="PTHR10938:SF0">
    <property type="entry name" value="TRANSLATION INITIATION FACTOR IF-3, MITOCHONDRIAL"/>
    <property type="match status" value="1"/>
</dbReference>
<dbReference type="Pfam" id="PF00707">
    <property type="entry name" value="IF3_C"/>
    <property type="match status" value="1"/>
</dbReference>
<dbReference type="Pfam" id="PF05198">
    <property type="entry name" value="IF3_N"/>
    <property type="match status" value="1"/>
</dbReference>
<dbReference type="SUPFAM" id="SSF55200">
    <property type="entry name" value="Translation initiation factor IF3, C-terminal domain"/>
    <property type="match status" value="1"/>
</dbReference>
<dbReference type="SUPFAM" id="SSF54364">
    <property type="entry name" value="Translation initiation factor IF3, N-terminal domain"/>
    <property type="match status" value="1"/>
</dbReference>
<dbReference type="PROSITE" id="PS00938">
    <property type="entry name" value="IF3"/>
    <property type="match status" value="1"/>
</dbReference>
<organism>
    <name type="scientific">Pseudomonas fluorescens (strain SBW25)</name>
    <dbReference type="NCBI Taxonomy" id="216595"/>
    <lineage>
        <taxon>Bacteria</taxon>
        <taxon>Pseudomonadati</taxon>
        <taxon>Pseudomonadota</taxon>
        <taxon>Gammaproteobacteria</taxon>
        <taxon>Pseudomonadales</taxon>
        <taxon>Pseudomonadaceae</taxon>
        <taxon>Pseudomonas</taxon>
    </lineage>
</organism>
<comment type="function">
    <text evidence="1">IF-3 binds to the 30S ribosomal subunit and shifts the equilibrium between 70S ribosomes and their 50S and 30S subunits in favor of the free subunits, thus enhancing the availability of 30S subunits on which protein synthesis initiation begins.</text>
</comment>
<comment type="subunit">
    <text evidence="1">Monomer.</text>
</comment>
<comment type="subcellular location">
    <subcellularLocation>
        <location evidence="1">Cytoplasm</location>
    </subcellularLocation>
</comment>
<comment type="similarity">
    <text evidence="1">Belongs to the IF-3 family.</text>
</comment>
<sequence length="183" mass="20850">MIIKREMRQDKRAAPKAPINENISAREVRLIGADGEQIGIVSIDEALRIAEESKLDLVEISADAIPPVCRVMDYGKSIFEKKKQVAAAKKNQKQIQVKEIKFRPGTEEGDYQVKLRNLVRFLSDGDRAKVSLRFRGREMAHQELGMELLKRVEADLLEYGSVEQHPKMEGRQLIMVIAPKKKK</sequence>
<evidence type="ECO:0000255" key="1">
    <source>
        <dbReference type="HAMAP-Rule" id="MF_00080"/>
    </source>
</evidence>